<evidence type="ECO:0000255" key="1">
    <source>
        <dbReference type="HAMAP-Rule" id="MF_00291"/>
    </source>
</evidence>
<evidence type="ECO:0000256" key="2">
    <source>
        <dbReference type="SAM" id="MobiDB-lite"/>
    </source>
</evidence>
<evidence type="ECO:0000305" key="3"/>
<comment type="similarity">
    <text evidence="1">Belongs to the universal ribosomal protein uS2 family.</text>
</comment>
<proteinExistence type="inferred from homology"/>
<keyword id="KW-0687">Ribonucleoprotein</keyword>
<keyword id="KW-0689">Ribosomal protein</keyword>
<reference key="1">
    <citation type="journal article" date="2008" name="J. Bacteriol.">
        <title>Genome sequence of Staphylococcus aureus strain Newman and comparative analysis of staphylococcal genomes: polymorphism and evolution of two major pathogenicity islands.</title>
        <authorList>
            <person name="Baba T."/>
            <person name="Bae T."/>
            <person name="Schneewind O."/>
            <person name="Takeuchi F."/>
            <person name="Hiramatsu K."/>
        </authorList>
    </citation>
    <scope>NUCLEOTIDE SEQUENCE [LARGE SCALE GENOMIC DNA]</scope>
    <source>
        <strain>Newman</strain>
    </source>
</reference>
<protein>
    <recommendedName>
        <fullName evidence="1">Small ribosomal subunit protein uS2</fullName>
    </recommendedName>
    <alternativeName>
        <fullName evidence="3">30S ribosomal protein S2</fullName>
    </alternativeName>
</protein>
<feature type="chain" id="PRO_1000071951" description="Small ribosomal subunit protein uS2">
    <location>
        <begin position="1"/>
        <end position="255"/>
    </location>
</feature>
<feature type="region of interest" description="Disordered" evidence="2">
    <location>
        <begin position="226"/>
        <end position="255"/>
    </location>
</feature>
<gene>
    <name evidence="1" type="primary">rpsB</name>
    <name type="ordered locus">NWMN_1166</name>
</gene>
<name>RS2_STAAE</name>
<organism>
    <name type="scientific">Staphylococcus aureus (strain Newman)</name>
    <dbReference type="NCBI Taxonomy" id="426430"/>
    <lineage>
        <taxon>Bacteria</taxon>
        <taxon>Bacillati</taxon>
        <taxon>Bacillota</taxon>
        <taxon>Bacilli</taxon>
        <taxon>Bacillales</taxon>
        <taxon>Staphylococcaceae</taxon>
        <taxon>Staphylococcus</taxon>
    </lineage>
</organism>
<dbReference type="EMBL" id="AP009351">
    <property type="protein sequence ID" value="BAF67438.1"/>
    <property type="molecule type" value="Genomic_DNA"/>
</dbReference>
<dbReference type="RefSeq" id="WP_000268484.1">
    <property type="nucleotide sequence ID" value="NZ_JBBIAE010000001.1"/>
</dbReference>
<dbReference type="SMR" id="A6QGF6"/>
<dbReference type="GeneID" id="98345571"/>
<dbReference type="KEGG" id="sae:NWMN_1166"/>
<dbReference type="HOGENOM" id="CLU_040318_1_2_9"/>
<dbReference type="Proteomes" id="UP000006386">
    <property type="component" value="Chromosome"/>
</dbReference>
<dbReference type="GO" id="GO:0022627">
    <property type="term" value="C:cytosolic small ribosomal subunit"/>
    <property type="evidence" value="ECO:0007669"/>
    <property type="project" value="TreeGrafter"/>
</dbReference>
<dbReference type="GO" id="GO:0003735">
    <property type="term" value="F:structural constituent of ribosome"/>
    <property type="evidence" value="ECO:0007669"/>
    <property type="project" value="InterPro"/>
</dbReference>
<dbReference type="GO" id="GO:0006412">
    <property type="term" value="P:translation"/>
    <property type="evidence" value="ECO:0007669"/>
    <property type="project" value="UniProtKB-UniRule"/>
</dbReference>
<dbReference type="CDD" id="cd01425">
    <property type="entry name" value="RPS2"/>
    <property type="match status" value="1"/>
</dbReference>
<dbReference type="FunFam" id="1.10.287.610:FF:000001">
    <property type="entry name" value="30S ribosomal protein S2"/>
    <property type="match status" value="1"/>
</dbReference>
<dbReference type="Gene3D" id="3.40.50.10490">
    <property type="entry name" value="Glucose-6-phosphate isomerase like protein, domain 1"/>
    <property type="match status" value="1"/>
</dbReference>
<dbReference type="Gene3D" id="1.10.287.610">
    <property type="entry name" value="Helix hairpin bin"/>
    <property type="match status" value="1"/>
</dbReference>
<dbReference type="HAMAP" id="MF_00291_B">
    <property type="entry name" value="Ribosomal_uS2_B"/>
    <property type="match status" value="1"/>
</dbReference>
<dbReference type="InterPro" id="IPR001865">
    <property type="entry name" value="Ribosomal_uS2"/>
</dbReference>
<dbReference type="InterPro" id="IPR005706">
    <property type="entry name" value="Ribosomal_uS2_bac/mit/plastid"/>
</dbReference>
<dbReference type="InterPro" id="IPR018130">
    <property type="entry name" value="Ribosomal_uS2_CS"/>
</dbReference>
<dbReference type="InterPro" id="IPR023591">
    <property type="entry name" value="Ribosomal_uS2_flav_dom_sf"/>
</dbReference>
<dbReference type="NCBIfam" id="TIGR01011">
    <property type="entry name" value="rpsB_bact"/>
    <property type="match status" value="1"/>
</dbReference>
<dbReference type="PANTHER" id="PTHR12534">
    <property type="entry name" value="30S RIBOSOMAL PROTEIN S2 PROKARYOTIC AND ORGANELLAR"/>
    <property type="match status" value="1"/>
</dbReference>
<dbReference type="PANTHER" id="PTHR12534:SF0">
    <property type="entry name" value="SMALL RIBOSOMAL SUBUNIT PROTEIN US2M"/>
    <property type="match status" value="1"/>
</dbReference>
<dbReference type="Pfam" id="PF00318">
    <property type="entry name" value="Ribosomal_S2"/>
    <property type="match status" value="1"/>
</dbReference>
<dbReference type="PRINTS" id="PR00395">
    <property type="entry name" value="RIBOSOMALS2"/>
</dbReference>
<dbReference type="SUPFAM" id="SSF52313">
    <property type="entry name" value="Ribosomal protein S2"/>
    <property type="match status" value="1"/>
</dbReference>
<dbReference type="PROSITE" id="PS00962">
    <property type="entry name" value="RIBOSOMAL_S2_1"/>
    <property type="match status" value="1"/>
</dbReference>
<dbReference type="PROSITE" id="PS00963">
    <property type="entry name" value="RIBOSOMAL_S2_2"/>
    <property type="match status" value="1"/>
</dbReference>
<sequence length="255" mass="29094">MAVISMKQLLEAGVHFGHQTRRWNPKMKKYIFTERNGIYIIDLQKTVKKVDEAYNFLKQVSEDGGQVLFVGTKKQAQESVKSEAERAGQFYINQRWLGGLLTNYKTISKRIKRISEIEKMEEDGLFEVLPKKEVVELKKEYDRLIKFLGGIRDMKSMPQALFVVDPRKERNAIAEARKLNIPIVGIVDTNCDPDEIDYVIPANDDAIRAVKLLTAKMADAILEGQQGVSNEEVAAEQNIDLDEKEKSEETEATEE</sequence>
<accession>A6QGF6</accession>